<proteinExistence type="inferred from homology"/>
<protein>
    <recommendedName>
        <fullName evidence="1">Ribosome maturation factor RimP</fullName>
    </recommendedName>
</protein>
<accession>Q31GK7</accession>
<gene>
    <name evidence="1" type="primary">rimP</name>
    <name type="ordered locus">Tcr_1121</name>
</gene>
<dbReference type="EMBL" id="CP000109">
    <property type="protein sequence ID" value="ABB41716.1"/>
    <property type="molecule type" value="Genomic_DNA"/>
</dbReference>
<dbReference type="SMR" id="Q31GK7"/>
<dbReference type="STRING" id="317025.Tcr_1121"/>
<dbReference type="KEGG" id="tcx:Tcr_1121"/>
<dbReference type="eggNOG" id="COG0779">
    <property type="taxonomic scope" value="Bacteria"/>
</dbReference>
<dbReference type="HOGENOM" id="CLU_070525_1_1_6"/>
<dbReference type="OrthoDB" id="9805006at2"/>
<dbReference type="GO" id="GO:0005829">
    <property type="term" value="C:cytosol"/>
    <property type="evidence" value="ECO:0007669"/>
    <property type="project" value="TreeGrafter"/>
</dbReference>
<dbReference type="GO" id="GO:0000028">
    <property type="term" value="P:ribosomal small subunit assembly"/>
    <property type="evidence" value="ECO:0007669"/>
    <property type="project" value="TreeGrafter"/>
</dbReference>
<dbReference type="GO" id="GO:0006412">
    <property type="term" value="P:translation"/>
    <property type="evidence" value="ECO:0007669"/>
    <property type="project" value="TreeGrafter"/>
</dbReference>
<dbReference type="CDD" id="cd01734">
    <property type="entry name" value="YlxS_C"/>
    <property type="match status" value="1"/>
</dbReference>
<dbReference type="FunFam" id="3.30.300.70:FF:000001">
    <property type="entry name" value="Ribosome maturation factor RimP"/>
    <property type="match status" value="1"/>
</dbReference>
<dbReference type="Gene3D" id="2.30.30.180">
    <property type="entry name" value="Ribosome maturation factor RimP, C-terminal domain"/>
    <property type="match status" value="1"/>
</dbReference>
<dbReference type="Gene3D" id="3.30.300.70">
    <property type="entry name" value="RimP-like superfamily, N-terminal"/>
    <property type="match status" value="1"/>
</dbReference>
<dbReference type="HAMAP" id="MF_01077">
    <property type="entry name" value="RimP"/>
    <property type="match status" value="1"/>
</dbReference>
<dbReference type="InterPro" id="IPR003728">
    <property type="entry name" value="Ribosome_maturation_RimP"/>
</dbReference>
<dbReference type="InterPro" id="IPR028998">
    <property type="entry name" value="RimP_C"/>
</dbReference>
<dbReference type="InterPro" id="IPR036847">
    <property type="entry name" value="RimP_C_sf"/>
</dbReference>
<dbReference type="InterPro" id="IPR028989">
    <property type="entry name" value="RimP_N"/>
</dbReference>
<dbReference type="InterPro" id="IPR035956">
    <property type="entry name" value="RimP_N_sf"/>
</dbReference>
<dbReference type="NCBIfam" id="NF000927">
    <property type="entry name" value="PRK00092.1-1"/>
    <property type="match status" value="1"/>
</dbReference>
<dbReference type="PANTHER" id="PTHR33867">
    <property type="entry name" value="RIBOSOME MATURATION FACTOR RIMP"/>
    <property type="match status" value="1"/>
</dbReference>
<dbReference type="PANTHER" id="PTHR33867:SF1">
    <property type="entry name" value="RIBOSOME MATURATION FACTOR RIMP"/>
    <property type="match status" value="1"/>
</dbReference>
<dbReference type="Pfam" id="PF17384">
    <property type="entry name" value="DUF150_C"/>
    <property type="match status" value="1"/>
</dbReference>
<dbReference type="Pfam" id="PF02576">
    <property type="entry name" value="RimP_N"/>
    <property type="match status" value="1"/>
</dbReference>
<dbReference type="SUPFAM" id="SSF74942">
    <property type="entry name" value="YhbC-like, C-terminal domain"/>
    <property type="match status" value="1"/>
</dbReference>
<dbReference type="SUPFAM" id="SSF75420">
    <property type="entry name" value="YhbC-like, N-terminal domain"/>
    <property type="match status" value="1"/>
</dbReference>
<comment type="function">
    <text evidence="1">Required for maturation of 30S ribosomal subunits.</text>
</comment>
<comment type="subcellular location">
    <subcellularLocation>
        <location evidence="1">Cytoplasm</location>
    </subcellularLocation>
</comment>
<comment type="similarity">
    <text evidence="1">Belongs to the RimP family.</text>
</comment>
<sequence length="151" mass="17042">MTLEDKIENLLRPTIETMGFQFWGCEYLPAGKHSTLRIYIDKDEVGVTVDDCGKVSRQVSAIMDVEDPISNAYMLEVSSPGMDRPLFHPEQYKAYEGQEVQVRTSSPVMGRKRFKGVMSQVSESDIAVEVDGELYEIPFSLIDKANVVPQF</sequence>
<name>RIMP_HYDCU</name>
<evidence type="ECO:0000255" key="1">
    <source>
        <dbReference type="HAMAP-Rule" id="MF_01077"/>
    </source>
</evidence>
<keyword id="KW-0963">Cytoplasm</keyword>
<keyword id="KW-0690">Ribosome biogenesis</keyword>
<organism>
    <name type="scientific">Hydrogenovibrio crunogenus (strain DSM 25203 / XCL-2)</name>
    <name type="common">Thiomicrospira crunogena</name>
    <dbReference type="NCBI Taxonomy" id="317025"/>
    <lineage>
        <taxon>Bacteria</taxon>
        <taxon>Pseudomonadati</taxon>
        <taxon>Pseudomonadota</taxon>
        <taxon>Gammaproteobacteria</taxon>
        <taxon>Thiotrichales</taxon>
        <taxon>Piscirickettsiaceae</taxon>
        <taxon>Hydrogenovibrio</taxon>
    </lineage>
</organism>
<reference key="1">
    <citation type="journal article" date="2006" name="PLoS Biol.">
        <title>The genome of deep-sea vent chemolithoautotroph Thiomicrospira crunogena XCL-2.</title>
        <authorList>
            <person name="Scott K.M."/>
            <person name="Sievert S.M."/>
            <person name="Abril F.N."/>
            <person name="Ball L.A."/>
            <person name="Barrett C.J."/>
            <person name="Blake R.A."/>
            <person name="Boller A.J."/>
            <person name="Chain P.S.G."/>
            <person name="Clark J.A."/>
            <person name="Davis C.R."/>
            <person name="Detter C."/>
            <person name="Do K.F."/>
            <person name="Dobrinski K.P."/>
            <person name="Faza B.I."/>
            <person name="Fitzpatrick K.A."/>
            <person name="Freyermuth S.K."/>
            <person name="Harmer T.L."/>
            <person name="Hauser L.J."/>
            <person name="Huegler M."/>
            <person name="Kerfeld C.A."/>
            <person name="Klotz M.G."/>
            <person name="Kong W.W."/>
            <person name="Land M."/>
            <person name="Lapidus A."/>
            <person name="Larimer F.W."/>
            <person name="Longo D.L."/>
            <person name="Lucas S."/>
            <person name="Malfatti S.A."/>
            <person name="Massey S.E."/>
            <person name="Martin D.D."/>
            <person name="McCuddin Z."/>
            <person name="Meyer F."/>
            <person name="Moore J.L."/>
            <person name="Ocampo L.H. Jr."/>
            <person name="Paul J.H."/>
            <person name="Paulsen I.T."/>
            <person name="Reep D.K."/>
            <person name="Ren Q."/>
            <person name="Ross R.L."/>
            <person name="Sato P.Y."/>
            <person name="Thomas P."/>
            <person name="Tinkham L.E."/>
            <person name="Zeruth G.T."/>
        </authorList>
    </citation>
    <scope>NUCLEOTIDE SEQUENCE [LARGE SCALE GENOMIC DNA]</scope>
    <source>
        <strain>DSM 25203 / XCL-2</strain>
    </source>
</reference>
<feature type="chain" id="PRO_0000229289" description="Ribosome maturation factor RimP">
    <location>
        <begin position="1"/>
        <end position="151"/>
    </location>
</feature>